<reference key="1">
    <citation type="journal article" date="1997" name="Gene">
        <title>Conserved features of selenocysteine insertion sequence (SECIS) elements in selenoprotein W cDNAs from five species.</title>
        <authorList>
            <person name="Gu Q.-P."/>
            <person name="Beilstein M.A."/>
            <person name="Vendeland S.C."/>
            <person name="Lugade A."/>
            <person name="Ream W."/>
            <person name="Whanger P.D."/>
        </authorList>
    </citation>
    <scope>NUCLEOTIDE SEQUENCE [MRNA]</scope>
    <source>
        <tissue>Skeletal muscle</tissue>
    </source>
</reference>
<reference key="2">
    <citation type="journal article" date="2002" name="FEBS Lett.">
        <title>Selenoprotein W is a glutathione-dependent antioxidant in vivo.</title>
        <authorList>
            <person name="Jeong D."/>
            <person name="Kim T.S."/>
            <person name="Chung Y.W."/>
            <person name="Lee B.J."/>
            <person name="Kim I.Y."/>
        </authorList>
    </citation>
    <scope>NUCLEOTIDE SEQUENCE [MRNA]</scope>
    <scope>FUNCTION</scope>
    <scope>MUTAGENESIS OF SEC-13 AND CYS-37</scope>
    <source>
        <tissue>Brain</tissue>
    </source>
</reference>
<reference key="3">
    <citation type="journal article" date="2007" name="Biochemistry">
        <title>SelT, SelW, SelH, and Rdx12: genomics and molecular insights into the functions of selenoproteins of a novel thioredoxin-like family.</title>
        <authorList>
            <person name="Dikiy A."/>
            <person name="Novoselov S.V."/>
            <person name="Fomenko D.E."/>
            <person name="Sengupta A."/>
            <person name="Carlson B.A."/>
            <person name="Cerny R.L."/>
            <person name="Ginalski K."/>
            <person name="Grishin N.V."/>
            <person name="Hatfield D.L."/>
            <person name="Gladyshev V.N."/>
        </authorList>
    </citation>
    <scope>NUCLEOTIDE SEQUENCE [MRNA]</scope>
    <scope>FUNCTION</scope>
    <scope>INTERACTION WITH YWHAB; YWHAG; DPYSL2; PRDX1; HSP70 AND HSP90</scope>
    <scope>TISSUE SPECIFICITY</scope>
    <source>
        <tissue>Brain</tissue>
    </source>
</reference>
<reference key="4">
    <citation type="submission" date="1997-09" db="EMBL/GenBank/DDBJ databases">
        <authorList>
            <person name="Bellingham J."/>
            <person name="Gregory-Evans C.Y."/>
        </authorList>
    </citation>
    <scope>NUCLEOTIDE SEQUENCE [MRNA]</scope>
    <source>
        <strain>C57BL/6J</strain>
        <tissue>Fetus</tissue>
    </source>
</reference>
<reference key="5">
    <citation type="journal article" date="2005" name="Science">
        <title>The transcriptional landscape of the mammalian genome.</title>
        <authorList>
            <person name="Carninci P."/>
            <person name="Kasukawa T."/>
            <person name="Katayama S."/>
            <person name="Gough J."/>
            <person name="Frith M.C."/>
            <person name="Maeda N."/>
            <person name="Oyama R."/>
            <person name="Ravasi T."/>
            <person name="Lenhard B."/>
            <person name="Wells C."/>
            <person name="Kodzius R."/>
            <person name="Shimokawa K."/>
            <person name="Bajic V.B."/>
            <person name="Brenner S.E."/>
            <person name="Batalov S."/>
            <person name="Forrest A.R."/>
            <person name="Zavolan M."/>
            <person name="Davis M.J."/>
            <person name="Wilming L.G."/>
            <person name="Aidinis V."/>
            <person name="Allen J.E."/>
            <person name="Ambesi-Impiombato A."/>
            <person name="Apweiler R."/>
            <person name="Aturaliya R.N."/>
            <person name="Bailey T.L."/>
            <person name="Bansal M."/>
            <person name="Baxter L."/>
            <person name="Beisel K.W."/>
            <person name="Bersano T."/>
            <person name="Bono H."/>
            <person name="Chalk A.M."/>
            <person name="Chiu K.P."/>
            <person name="Choudhary V."/>
            <person name="Christoffels A."/>
            <person name="Clutterbuck D.R."/>
            <person name="Crowe M.L."/>
            <person name="Dalla E."/>
            <person name="Dalrymple B.P."/>
            <person name="de Bono B."/>
            <person name="Della Gatta G."/>
            <person name="di Bernardo D."/>
            <person name="Down T."/>
            <person name="Engstrom P."/>
            <person name="Fagiolini M."/>
            <person name="Faulkner G."/>
            <person name="Fletcher C.F."/>
            <person name="Fukushima T."/>
            <person name="Furuno M."/>
            <person name="Futaki S."/>
            <person name="Gariboldi M."/>
            <person name="Georgii-Hemming P."/>
            <person name="Gingeras T.R."/>
            <person name="Gojobori T."/>
            <person name="Green R.E."/>
            <person name="Gustincich S."/>
            <person name="Harbers M."/>
            <person name="Hayashi Y."/>
            <person name="Hensch T.K."/>
            <person name="Hirokawa N."/>
            <person name="Hill D."/>
            <person name="Huminiecki L."/>
            <person name="Iacono M."/>
            <person name="Ikeo K."/>
            <person name="Iwama A."/>
            <person name="Ishikawa T."/>
            <person name="Jakt M."/>
            <person name="Kanapin A."/>
            <person name="Katoh M."/>
            <person name="Kawasawa Y."/>
            <person name="Kelso J."/>
            <person name="Kitamura H."/>
            <person name="Kitano H."/>
            <person name="Kollias G."/>
            <person name="Krishnan S.P."/>
            <person name="Kruger A."/>
            <person name="Kummerfeld S.K."/>
            <person name="Kurochkin I.V."/>
            <person name="Lareau L.F."/>
            <person name="Lazarevic D."/>
            <person name="Lipovich L."/>
            <person name="Liu J."/>
            <person name="Liuni S."/>
            <person name="McWilliam S."/>
            <person name="Madan Babu M."/>
            <person name="Madera M."/>
            <person name="Marchionni L."/>
            <person name="Matsuda H."/>
            <person name="Matsuzawa S."/>
            <person name="Miki H."/>
            <person name="Mignone F."/>
            <person name="Miyake S."/>
            <person name="Morris K."/>
            <person name="Mottagui-Tabar S."/>
            <person name="Mulder N."/>
            <person name="Nakano N."/>
            <person name="Nakauchi H."/>
            <person name="Ng P."/>
            <person name="Nilsson R."/>
            <person name="Nishiguchi S."/>
            <person name="Nishikawa S."/>
            <person name="Nori F."/>
            <person name="Ohara O."/>
            <person name="Okazaki Y."/>
            <person name="Orlando V."/>
            <person name="Pang K.C."/>
            <person name="Pavan W.J."/>
            <person name="Pavesi G."/>
            <person name="Pesole G."/>
            <person name="Petrovsky N."/>
            <person name="Piazza S."/>
            <person name="Reed J."/>
            <person name="Reid J.F."/>
            <person name="Ring B.Z."/>
            <person name="Ringwald M."/>
            <person name="Rost B."/>
            <person name="Ruan Y."/>
            <person name="Salzberg S.L."/>
            <person name="Sandelin A."/>
            <person name="Schneider C."/>
            <person name="Schoenbach C."/>
            <person name="Sekiguchi K."/>
            <person name="Semple C.A."/>
            <person name="Seno S."/>
            <person name="Sessa L."/>
            <person name="Sheng Y."/>
            <person name="Shibata Y."/>
            <person name="Shimada H."/>
            <person name="Shimada K."/>
            <person name="Silva D."/>
            <person name="Sinclair B."/>
            <person name="Sperling S."/>
            <person name="Stupka E."/>
            <person name="Sugiura K."/>
            <person name="Sultana R."/>
            <person name="Takenaka Y."/>
            <person name="Taki K."/>
            <person name="Tammoja K."/>
            <person name="Tan S.L."/>
            <person name="Tang S."/>
            <person name="Taylor M.S."/>
            <person name="Tegner J."/>
            <person name="Teichmann S.A."/>
            <person name="Ueda H.R."/>
            <person name="van Nimwegen E."/>
            <person name="Verardo R."/>
            <person name="Wei C.L."/>
            <person name="Yagi K."/>
            <person name="Yamanishi H."/>
            <person name="Zabarovsky E."/>
            <person name="Zhu S."/>
            <person name="Zimmer A."/>
            <person name="Hide W."/>
            <person name="Bult C."/>
            <person name="Grimmond S.M."/>
            <person name="Teasdale R.D."/>
            <person name="Liu E.T."/>
            <person name="Brusic V."/>
            <person name="Quackenbush J."/>
            <person name="Wahlestedt C."/>
            <person name="Mattick J.S."/>
            <person name="Hume D.A."/>
            <person name="Kai C."/>
            <person name="Sasaki D."/>
            <person name="Tomaru Y."/>
            <person name="Fukuda S."/>
            <person name="Kanamori-Katayama M."/>
            <person name="Suzuki M."/>
            <person name="Aoki J."/>
            <person name="Arakawa T."/>
            <person name="Iida J."/>
            <person name="Imamura K."/>
            <person name="Itoh M."/>
            <person name="Kato T."/>
            <person name="Kawaji H."/>
            <person name="Kawagashira N."/>
            <person name="Kawashima T."/>
            <person name="Kojima M."/>
            <person name="Kondo S."/>
            <person name="Konno H."/>
            <person name="Nakano K."/>
            <person name="Ninomiya N."/>
            <person name="Nishio T."/>
            <person name="Okada M."/>
            <person name="Plessy C."/>
            <person name="Shibata K."/>
            <person name="Shiraki T."/>
            <person name="Suzuki S."/>
            <person name="Tagami M."/>
            <person name="Waki K."/>
            <person name="Watahiki A."/>
            <person name="Okamura-Oho Y."/>
            <person name="Suzuki H."/>
            <person name="Kawai J."/>
            <person name="Hayashizaki Y."/>
        </authorList>
    </citation>
    <scope>NUCLEOTIDE SEQUENCE [LARGE SCALE MRNA]</scope>
    <source>
        <strain>C57BL/6J</strain>
        <tissue>Kidney</tissue>
        <tissue>Stomach</tissue>
    </source>
</reference>
<reference key="6">
    <citation type="journal article" date="2004" name="Genome Res.">
        <title>The status, quality, and expansion of the NIH full-length cDNA project: the Mammalian Gene Collection (MGC).</title>
        <authorList>
            <consortium name="The MGC Project Team"/>
        </authorList>
    </citation>
    <scope>NUCLEOTIDE SEQUENCE [LARGE SCALE MRNA]</scope>
    <source>
        <strain>C57BL/6J</strain>
        <tissue>Brain</tissue>
    </source>
</reference>
<reference key="7">
    <citation type="journal article" date="2006" name="J. Inorg. Biochem.">
        <title>Selenoprotein W during development and oxidative stress.</title>
        <authorList>
            <person name="Loflin J."/>
            <person name="Lopez N."/>
            <person name="Whanger P.D."/>
            <person name="Kioussi C."/>
        </authorList>
    </citation>
    <scope>FUNCTION</scope>
    <scope>DEVELOPMENTAL STAGE</scope>
    <scope>TISSUE SPECIFICITY</scope>
    <scope>INDUCTION</scope>
</reference>
<reference key="8">
    <citation type="journal article" date="2010" name="Cell">
        <title>A tissue-specific atlas of mouse protein phosphorylation and expression.</title>
        <authorList>
            <person name="Huttlin E.L."/>
            <person name="Jedrychowski M.P."/>
            <person name="Elias J.E."/>
            <person name="Goswami T."/>
            <person name="Rad R."/>
            <person name="Beausoleil S.A."/>
            <person name="Villen J."/>
            <person name="Haas W."/>
            <person name="Sowa M.E."/>
            <person name="Gygi S.P."/>
        </authorList>
    </citation>
    <scope>IDENTIFICATION BY MASS SPECTROMETRY [LARGE SCALE ANALYSIS]</scope>
    <source>
        <tissue>Brain</tissue>
    </source>
</reference>
<reference key="9">
    <citation type="journal article" date="2007" name="J. Biol. Chem.">
        <title>Solution structure of selenoprotein W and NMR analysis of its interaction with 14-3-3 proteins.</title>
        <authorList>
            <person name="Aachmann F.L."/>
            <person name="Fomenko D.E."/>
            <person name="Soragni A."/>
            <person name="Gladyshev V.N."/>
            <person name="Dikiy A."/>
        </authorList>
    </citation>
    <scope>STRUCTURE BY NMR OF MUTANT SER-10/CYS-13</scope>
    <scope>INTERACTION WITH YWHAB AND YWHAG</scope>
</reference>
<protein>
    <recommendedName>
        <fullName evidence="7">Selenoprotein W</fullName>
        <shortName evidence="6">SelW</shortName>
    </recommendedName>
</protein>
<proteinExistence type="evidence at protein level"/>
<evidence type="ECO:0000250" key="1"/>
<evidence type="ECO:0000269" key="2">
    <source>
    </source>
</evidence>
<evidence type="ECO:0000269" key="3">
    <source>
    </source>
</evidence>
<evidence type="ECO:0000269" key="4">
    <source>
    </source>
</evidence>
<evidence type="ECO:0000269" key="5">
    <source>
    </source>
</evidence>
<evidence type="ECO:0000303" key="6">
    <source>
    </source>
</evidence>
<evidence type="ECO:0000303" key="7">
    <source>
    </source>
</evidence>
<evidence type="ECO:0000305" key="8"/>
<evidence type="ECO:0000312" key="9">
    <source>
        <dbReference type="MGI" id="MGI:1100878"/>
    </source>
</evidence>
<evidence type="ECO:0007829" key="10">
    <source>
        <dbReference type="PDB" id="2NPB"/>
    </source>
</evidence>
<comment type="function">
    <text evidence="2 3 4">Plays a role as a glutathione (GSH)-dependent antioxidant. May be involved in a redox-related process. May play a role in the myopathies of selenium deficiency.</text>
</comment>
<comment type="subunit">
    <text evidence="4 5">Interacts with DPYSL2, PRDX1, YWHAB, YWHAG, HSP70 and HSP90.</text>
</comment>
<comment type="subcellular location">
    <subcellularLocation>
        <location>Cytoplasm</location>
    </subcellularLocation>
</comment>
<comment type="tissue specificity">
    <text evidence="3 4">In the embryo, expressed in the developing nervous system and in mesoderm-derived tissues such as heart and limbs. In the adult, predominantly expressed in brain, skeletal muscle and heart.</text>
</comment>
<comment type="developmental stage">
    <text evidence="3">Expression is first detected in the newly implanted embryo. Levels increase gradually during embryonic development with a steady increase during the second week and a dramatic increase by the end of gestation. Expression increases gradually in proliferating myotubes but is low in terminally differentiated myobutubes.</text>
</comment>
<comment type="induction">
    <text evidence="3">Down-regulated by hydrogen peroxide. Increased levels are detected after treatment with L-buthionine sulfoxide (BSO) before exposure to hydrogen peroxide.</text>
</comment>
<comment type="similarity">
    <text evidence="8">Belongs to the SelWTH family. Selenoprotein W subfamily.</text>
</comment>
<name>SELW_MOUSE</name>
<feature type="chain" id="PRO_0000097680" description="Selenoprotein W">
    <location>
        <begin position="1"/>
        <end position="88"/>
    </location>
</feature>
<feature type="non-standard amino acid" description="Selenocysteine">
    <location>
        <position position="13"/>
    </location>
</feature>
<feature type="modified residue" description="S-glutathionyl cysteine" evidence="1">
    <location>
        <position position="37"/>
    </location>
</feature>
<feature type="cross-link" description="Cysteinyl-selenocysteine (Cys-Sec); redox-active" evidence="1">
    <location>
        <begin position="10"/>
        <end position="13"/>
    </location>
</feature>
<feature type="mutagenesis site" description="Disrupts redox reaction.">
    <original>C</original>
    <variation>S</variation>
    <location>
        <position position="10"/>
    </location>
</feature>
<feature type="mutagenesis site" description="Increased sensitivity to hydrogen peroxide-induced toxicity." evidence="2">
    <original>U</original>
    <variation>C</variation>
    <location>
        <position position="13"/>
    </location>
</feature>
<feature type="mutagenesis site" description="Impairs protection against hydrogen peroxide-induced toxicity." evidence="2">
    <original>U</original>
    <variation>S</variation>
    <location>
        <position position="13"/>
    </location>
</feature>
<feature type="mutagenesis site" description="Impairs protection against hydrogen peroxide-induced toxicity." evidence="2">
    <original>C</original>
    <variation>S</variation>
    <location>
        <position position="37"/>
    </location>
</feature>
<feature type="strand" evidence="10">
    <location>
        <begin position="3"/>
        <end position="8"/>
    </location>
</feature>
<feature type="helix" evidence="10">
    <location>
        <begin position="15"/>
        <end position="29"/>
    </location>
</feature>
<feature type="strand" evidence="10">
    <location>
        <begin position="34"/>
        <end position="38"/>
    </location>
</feature>
<feature type="strand" evidence="10">
    <location>
        <begin position="49"/>
        <end position="52"/>
    </location>
</feature>
<feature type="strand" evidence="10">
    <location>
        <begin position="55"/>
        <end position="59"/>
    </location>
</feature>
<feature type="turn" evidence="10">
    <location>
        <begin position="60"/>
        <end position="63"/>
    </location>
</feature>
<feature type="helix" evidence="10">
    <location>
        <begin position="70"/>
        <end position="87"/>
    </location>
</feature>
<keyword id="KW-0002">3D-structure</keyword>
<keyword id="KW-0049">Antioxidant</keyword>
<keyword id="KW-0963">Cytoplasm</keyword>
<keyword id="KW-0318">Glutathionylation</keyword>
<keyword id="KW-0676">Redox-active center</keyword>
<keyword id="KW-1185">Reference proteome</keyword>
<keyword id="KW-0712">Selenocysteine</keyword>
<sequence>MALAVRVVYCGAUGYKPKYLQLKEKLEHEFPGCLDICGEGTPQVTGFFEVTVAGKLVHSKKRGDGYVDTESKFRKLVTAIKAALAQCQ</sequence>
<gene>
    <name evidence="9" type="primary">Selenow</name>
    <name evidence="6" type="synonym">Selw</name>
    <name evidence="9" type="synonym">Sepw1</name>
</gene>
<dbReference type="EMBL" id="U67890">
    <property type="protein sequence ID" value="AAC53317.1"/>
    <property type="molecule type" value="mRNA"/>
</dbReference>
<dbReference type="EMBL" id="AF241527">
    <property type="protein sequence ID" value="AAF64481.1"/>
    <property type="molecule type" value="mRNA"/>
</dbReference>
<dbReference type="EMBL" id="AF015284">
    <property type="protein sequence ID" value="AAB69860.1"/>
    <property type="molecule type" value="mRNA"/>
</dbReference>
<dbReference type="EMBL" id="AK002870">
    <property type="protein sequence ID" value="BAC55247.1"/>
    <property type="molecule type" value="mRNA"/>
</dbReference>
<dbReference type="EMBL" id="AK028124">
    <property type="protein sequence ID" value="BAC55256.1"/>
    <property type="molecule type" value="mRNA"/>
</dbReference>
<dbReference type="EMBL" id="BC052719">
    <property type="protein sequence ID" value="AAH52719.2"/>
    <property type="molecule type" value="mRNA"/>
</dbReference>
<dbReference type="CCDS" id="CCDS39778.1"/>
<dbReference type="RefSeq" id="NP_033182.1">
    <property type="nucleotide sequence ID" value="NM_009156.2"/>
</dbReference>
<dbReference type="PDB" id="2NPB">
    <property type="method" value="NMR"/>
    <property type="chains" value="A=1-88"/>
</dbReference>
<dbReference type="PDBsum" id="2NPB"/>
<dbReference type="BMRB" id="P63300"/>
<dbReference type="SMR" id="P63300"/>
<dbReference type="FunCoup" id="P63300">
    <property type="interactions" value="92"/>
</dbReference>
<dbReference type="STRING" id="10090.ENSMUSP00000038943"/>
<dbReference type="PhosphoSitePlus" id="P63300"/>
<dbReference type="PaxDb" id="10090-ENSMUSP00000038943"/>
<dbReference type="PeptideAtlas" id="P63300"/>
<dbReference type="ProteomicsDB" id="261148"/>
<dbReference type="Antibodypedia" id="61829">
    <property type="antibodies" value="89 antibodies from 16 providers"/>
</dbReference>
<dbReference type="DNASU" id="20364"/>
<dbReference type="Ensembl" id="ENSMUST00000044355.11">
    <property type="protein sequence ID" value="ENSMUSP00000038943.9"/>
    <property type="gene ID" value="ENSMUSG00000041571.11"/>
</dbReference>
<dbReference type="GeneID" id="20364"/>
<dbReference type="KEGG" id="mmu:20364"/>
<dbReference type="UCSC" id="uc009fgp.1">
    <property type="organism name" value="mouse"/>
</dbReference>
<dbReference type="AGR" id="MGI:1100878"/>
<dbReference type="CTD" id="6415"/>
<dbReference type="MGI" id="MGI:1100878">
    <property type="gene designation" value="Selenow"/>
</dbReference>
<dbReference type="VEuPathDB" id="HostDB:ENSMUSG00000041571"/>
<dbReference type="eggNOG" id="ENOG502S9W8">
    <property type="taxonomic scope" value="Eukaryota"/>
</dbReference>
<dbReference type="GeneTree" id="ENSGT00940000161069"/>
<dbReference type="HOGENOM" id="CLU_170012_0_0_1"/>
<dbReference type="InParanoid" id="P63300"/>
<dbReference type="OMA" id="WGYKSKY"/>
<dbReference type="OrthoDB" id="444492at2759"/>
<dbReference type="PhylomeDB" id="P63300"/>
<dbReference type="TreeFam" id="TF326627"/>
<dbReference type="BioGRID-ORCS" id="20364">
    <property type="hits" value="0 hits in 78 CRISPR screens"/>
</dbReference>
<dbReference type="ChiTaRS" id="Selenow">
    <property type="organism name" value="mouse"/>
</dbReference>
<dbReference type="EvolutionaryTrace" id="P63300"/>
<dbReference type="PRO" id="PR:P63300"/>
<dbReference type="Proteomes" id="UP000000589">
    <property type="component" value="Chromosome 7"/>
</dbReference>
<dbReference type="RNAct" id="P63300">
    <property type="molecule type" value="protein"/>
</dbReference>
<dbReference type="Bgee" id="ENSMUSG00000041571">
    <property type="expression patterns" value="Expressed in floor plate of midbrain and 250 other cell types or tissues"/>
</dbReference>
<dbReference type="GO" id="GO:0005737">
    <property type="term" value="C:cytoplasm"/>
    <property type="evidence" value="ECO:0000304"/>
    <property type="project" value="UniProtKB"/>
</dbReference>
<dbReference type="GO" id="GO:0005886">
    <property type="term" value="C:plasma membrane"/>
    <property type="evidence" value="ECO:0000304"/>
    <property type="project" value="UniProtKB"/>
</dbReference>
<dbReference type="GO" id="GO:0016209">
    <property type="term" value="F:antioxidant activity"/>
    <property type="evidence" value="ECO:0007669"/>
    <property type="project" value="UniProtKB-KW"/>
</dbReference>
<dbReference type="GO" id="GO:0016491">
    <property type="term" value="F:oxidoreductase activity"/>
    <property type="evidence" value="ECO:0000304"/>
    <property type="project" value="UniProtKB"/>
</dbReference>
<dbReference type="GO" id="GO:0030218">
    <property type="term" value="P:erythrocyte differentiation"/>
    <property type="evidence" value="ECO:0000315"/>
    <property type="project" value="MGI"/>
</dbReference>
<dbReference type="GO" id="GO:0032496">
    <property type="term" value="P:response to lipopolysaccharide"/>
    <property type="evidence" value="ECO:0000314"/>
    <property type="project" value="MGI"/>
</dbReference>
<dbReference type="GO" id="GO:0006950">
    <property type="term" value="P:response to stress"/>
    <property type="evidence" value="ECO:0000315"/>
    <property type="project" value="MGI"/>
</dbReference>
<dbReference type="FunFam" id="3.40.30.10:FF:000158">
    <property type="entry name" value="Selenoprotein W"/>
    <property type="match status" value="1"/>
</dbReference>
<dbReference type="Gene3D" id="3.40.30.10">
    <property type="entry name" value="Glutaredoxin"/>
    <property type="match status" value="1"/>
</dbReference>
<dbReference type="InterPro" id="IPR011893">
    <property type="entry name" value="Selenoprotein_Rdx-typ"/>
</dbReference>
<dbReference type="InterPro" id="IPR051441">
    <property type="entry name" value="SelW_related"/>
</dbReference>
<dbReference type="InterPro" id="IPR036249">
    <property type="entry name" value="Thioredoxin-like_sf"/>
</dbReference>
<dbReference type="NCBIfam" id="TIGR02174">
    <property type="entry name" value="CXXU_selWTH"/>
    <property type="match status" value="1"/>
</dbReference>
<dbReference type="PANTHER" id="PTHR15124">
    <property type="entry name" value="SELENOPROTEIN W"/>
    <property type="match status" value="1"/>
</dbReference>
<dbReference type="PANTHER" id="PTHR15124:SF16">
    <property type="entry name" value="SELENOPROTEIN W"/>
    <property type="match status" value="1"/>
</dbReference>
<dbReference type="Pfam" id="PF10262">
    <property type="entry name" value="Rdx"/>
    <property type="match status" value="1"/>
</dbReference>
<dbReference type="SUPFAM" id="SSF52833">
    <property type="entry name" value="Thioredoxin-like"/>
    <property type="match status" value="1"/>
</dbReference>
<organism>
    <name type="scientific">Mus musculus</name>
    <name type="common">Mouse</name>
    <dbReference type="NCBI Taxonomy" id="10090"/>
    <lineage>
        <taxon>Eukaryota</taxon>
        <taxon>Metazoa</taxon>
        <taxon>Chordata</taxon>
        <taxon>Craniata</taxon>
        <taxon>Vertebrata</taxon>
        <taxon>Euteleostomi</taxon>
        <taxon>Mammalia</taxon>
        <taxon>Eutheria</taxon>
        <taxon>Euarchontoglires</taxon>
        <taxon>Glires</taxon>
        <taxon>Rodentia</taxon>
        <taxon>Myomorpha</taxon>
        <taxon>Muroidea</taxon>
        <taxon>Muridae</taxon>
        <taxon>Murinae</taxon>
        <taxon>Mus</taxon>
        <taxon>Mus</taxon>
    </lineage>
</organism>
<accession>P63300</accession>
<accession>O35965</accession>
<accession>P49904</accession>
<accession>Q9JIC2</accession>